<gene>
    <name evidence="1 10" type="primary">aroC</name>
    <name type="ordered locus">b2329</name>
    <name type="ordered locus">JW2326</name>
</gene>
<accession>P12008</accession>
<accession>P78193</accession>
<reference evidence="13" key="1">
    <citation type="journal article" date="1990" name="J. Gen. Microbiol.">
        <title>Isolation, characterization and nucleotide sequences of the aroC genes encoding chorismate synthase from Salmonella typhi and Escherichia coli.</title>
        <authorList>
            <person name="Charles I.G."/>
            <person name="Lamb H.K."/>
            <person name="Pickard D."/>
            <person name="Dougan G."/>
            <person name="Hawkins A.R."/>
        </authorList>
    </citation>
    <scope>NUCLEOTIDE SEQUENCE [GENOMIC DNA]</scope>
</reference>
<reference evidence="14 15" key="2">
    <citation type="journal article" date="1988" name="Biochem. J.">
        <title>The overexpression, purification and complete amino acid sequence of chorismate synthase from Escherichia coli K12 and its comparison with the enzyme from Neurospora crassa.</title>
        <authorList>
            <person name="White P.J."/>
            <person name="Millar G."/>
            <person name="Coggins J.R."/>
        </authorList>
    </citation>
    <scope>NUCLEOTIDE SEQUENCE [GENOMIC DNA]</scope>
    <scope>PROTEIN SEQUENCE OF 2-30</scope>
    <scope>FUNCTION</scope>
    <scope>COFACTOR</scope>
    <scope>SUBUNIT</scope>
    <source>
        <strain>K12</strain>
    </source>
</reference>
<reference key="3">
    <citation type="journal article" date="1997" name="DNA Res.">
        <title>Construction of a contiguous 874-kb sequence of the Escherichia coli-K12 genome corresponding to 50.0-68.8 min on the linkage map and analysis of its sequence features.</title>
        <authorList>
            <person name="Yamamoto Y."/>
            <person name="Aiba H."/>
            <person name="Baba T."/>
            <person name="Hayashi K."/>
            <person name="Inada T."/>
            <person name="Isono K."/>
            <person name="Itoh T."/>
            <person name="Kimura S."/>
            <person name="Kitagawa M."/>
            <person name="Makino K."/>
            <person name="Miki T."/>
            <person name="Mitsuhashi N."/>
            <person name="Mizobuchi K."/>
            <person name="Mori H."/>
            <person name="Nakade S."/>
            <person name="Nakamura Y."/>
            <person name="Nashimoto H."/>
            <person name="Oshima T."/>
            <person name="Oyama S."/>
            <person name="Saito N."/>
            <person name="Sampei G."/>
            <person name="Satoh Y."/>
            <person name="Sivasundaram S."/>
            <person name="Tagami H."/>
            <person name="Takahashi H."/>
            <person name="Takeda J."/>
            <person name="Takemoto K."/>
            <person name="Uehara K."/>
            <person name="Wada C."/>
            <person name="Yamagata S."/>
            <person name="Horiuchi T."/>
        </authorList>
    </citation>
    <scope>NUCLEOTIDE SEQUENCE [LARGE SCALE GENOMIC DNA]</scope>
    <source>
        <strain>K12 / W3110 / ATCC 27325 / DSM 5911</strain>
    </source>
</reference>
<reference key="4">
    <citation type="journal article" date="1997" name="Science">
        <title>The complete genome sequence of Escherichia coli K-12.</title>
        <authorList>
            <person name="Blattner F.R."/>
            <person name="Plunkett G. III"/>
            <person name="Bloch C.A."/>
            <person name="Perna N.T."/>
            <person name="Burland V."/>
            <person name="Riley M."/>
            <person name="Collado-Vides J."/>
            <person name="Glasner J.D."/>
            <person name="Rode C.K."/>
            <person name="Mayhew G.F."/>
            <person name="Gregor J."/>
            <person name="Davis N.W."/>
            <person name="Kirkpatrick H.A."/>
            <person name="Goeden M.A."/>
            <person name="Rose D.J."/>
            <person name="Mau B."/>
            <person name="Shao Y."/>
        </authorList>
    </citation>
    <scope>NUCLEOTIDE SEQUENCE [LARGE SCALE GENOMIC DNA]</scope>
    <source>
        <strain>K12 / MG1655 / ATCC 47076</strain>
    </source>
</reference>
<reference key="5">
    <citation type="journal article" date="2006" name="Mol. Syst. Biol.">
        <title>Highly accurate genome sequences of Escherichia coli K-12 strains MG1655 and W3110.</title>
        <authorList>
            <person name="Hayashi K."/>
            <person name="Morooka N."/>
            <person name="Yamamoto Y."/>
            <person name="Fujita K."/>
            <person name="Isono K."/>
            <person name="Choi S."/>
            <person name="Ohtsubo E."/>
            <person name="Baba T."/>
            <person name="Wanner B.L."/>
            <person name="Mori H."/>
            <person name="Horiuchi T."/>
        </authorList>
    </citation>
    <scope>NUCLEOTIDE SEQUENCE [LARGE SCALE GENOMIC DNA]</scope>
    <source>
        <strain>K12 / W3110 / ATCC 27325 / DSM 5911</strain>
    </source>
</reference>
<reference key="6">
    <citation type="journal article" date="1994" name="Anal. Biochem.">
        <title>A continuous, anaerobic spectrophotometric assay for chorismate synthase activity that utilizes photoreduced flavin mononucleotide.</title>
        <authorList>
            <person name="Ramjee M.K."/>
            <person name="Coggins J.R."/>
            <person name="Thorneley R.N."/>
        </authorList>
    </citation>
    <scope>FUNCTION</scope>
    <scope>CATALYTIC ACTIVITY</scope>
    <scope>COFACTOR</scope>
    <scope>BIOPHYSICOCHEMICAL PROPERTIES</scope>
</reference>
<reference key="7">
    <citation type="journal article" date="1995" name="Biochem. J.">
        <title>Escherichia coli chorismate synthase: a deuterium kinetic-isotope effect under single-turnover and steady-state conditions shows that a flavin intermediate forms before the C-(6proR)-H bond is cleaved.</title>
        <authorList>
            <person name="Bornemann S."/>
            <person name="Balasubramanian S."/>
            <person name="Coggins J.R."/>
            <person name="Abell C."/>
            <person name="Lowe D.J."/>
            <person name="Thorneley R.N."/>
        </authorList>
    </citation>
    <scope>FUNCTION</scope>
    <scope>CATALYTIC ACTIVITY</scope>
    <scope>BIOPHYSICOCHEMICAL PROPERTIES</scope>
    <scope>ACTIVITY REGULATION</scope>
</reference>
<reference key="8">
    <citation type="journal article" date="1996" name="Biochemistry">
        <title>The transient kinetics of Escherichia coli chorismate synthase: substrate consumption, product formation, phosphate dissociation, and characterization of a flavin intermediate.</title>
        <authorList>
            <person name="Bornemann S."/>
            <person name="Lowe D.J."/>
            <person name="Thorneley R.N."/>
        </authorList>
    </citation>
    <scope>FUNCTION</scope>
    <scope>CATALYTIC ACTIVITY</scope>
</reference>
<reference key="9">
    <citation type="journal article" date="1996" name="J. Biol. Chem.">
        <title>Studies with flavin analogs provide evidence that a protonated reduced FMN is the substrate-induced transient intermediate in the reaction of Escherichia coli chorismate synthase.</title>
        <authorList>
            <person name="Macheroux P."/>
            <person name="Bornemann S."/>
            <person name="Ghisla S."/>
            <person name="Thorneley R.N."/>
        </authorList>
    </citation>
    <scope>COFACTOR</scope>
</reference>
<reference key="10">
    <citation type="journal article" date="1998" name="Biochem. J.">
        <title>Evidence for a major structural change in Escherichia coli chorismate synthase induced by flavin and substrate binding.</title>
        <authorList>
            <person name="Macheroux P."/>
            <person name="Schoenbrunn E."/>
            <person name="Svergun D.I."/>
            <person name="Volkov V.V."/>
            <person name="Koch M.H."/>
            <person name="Bornemann S."/>
            <person name="Thorneley R.N."/>
        </authorList>
    </citation>
    <scope>COFACTOR</scope>
    <scope>SUBUNIT</scope>
</reference>
<reference key="11">
    <citation type="journal article" date="2000" name="Bioorg. Chem.">
        <title>A secondary beta deuterium kinetic isotope effect in the chorismate synthase reaction.</title>
        <authorList>
            <person name="Bornemann S."/>
            <person name="Theoclitou M.E."/>
            <person name="Brune M."/>
            <person name="Webb M.R."/>
            <person name="Thorneley R.N."/>
            <person name="Abell C."/>
        </authorList>
    </citation>
    <scope>FUNCTION</scope>
    <scope>CATALYTIC ACTIVITY</scope>
    <scope>COFACTOR</scope>
    <scope>REACTION MECHANISM</scope>
</reference>
<reference key="12">
    <citation type="journal article" date="2000" name="J. Biol. Chem.">
        <title>Studies with substrate and cofactor analogues provide evidence for a radical mechanism in the chorismate synthase reaction.</title>
        <authorList>
            <person name="Osborne A."/>
            <person name="Thorneley R.N."/>
            <person name="Abell C."/>
            <person name="Bornemann S."/>
        </authorList>
    </citation>
    <scope>FUNCTION</scope>
    <scope>CATALYTIC ACTIVITY</scope>
    <scope>COFACTOR</scope>
    <scope>ACTIVITY REGULATION</scope>
    <scope>REACTION MECHANISM</scope>
</reference>
<evidence type="ECO:0000255" key="1">
    <source>
        <dbReference type="HAMAP-Rule" id="MF_00300"/>
    </source>
</evidence>
<evidence type="ECO:0000269" key="2">
    <source>
    </source>
</evidence>
<evidence type="ECO:0000269" key="3">
    <source>
    </source>
</evidence>
<evidence type="ECO:0000269" key="4">
    <source>
    </source>
</evidence>
<evidence type="ECO:0000269" key="5">
    <source>
    </source>
</evidence>
<evidence type="ECO:0000269" key="6">
    <source>
    </source>
</evidence>
<evidence type="ECO:0000269" key="7">
    <source>
    </source>
</evidence>
<evidence type="ECO:0000269" key="8">
    <source>
    </source>
</evidence>
<evidence type="ECO:0000269" key="9">
    <source>
    </source>
</evidence>
<evidence type="ECO:0000303" key="10">
    <source>
    </source>
</evidence>
<evidence type="ECO:0000303" key="11">
    <source>
    </source>
</evidence>
<evidence type="ECO:0000305" key="12"/>
<evidence type="ECO:0000312" key="13">
    <source>
        <dbReference type="EMBL" id="AAA23487.1"/>
    </source>
</evidence>
<evidence type="ECO:0000312" key="14">
    <source>
        <dbReference type="EMBL" id="AAA23488.1"/>
    </source>
</evidence>
<evidence type="ECO:0000312" key="15">
    <source>
        <dbReference type="EMBL" id="CAA68707.1"/>
    </source>
</evidence>
<name>AROC_ECOLI</name>
<sequence length="361" mass="39137">MAGNTIGQLFRVTTFGESHGLALGCIVDGVPPGIPLTEADLQHDLDRRRPGTSRYTTQRREPDQVKILSGVFEGVTTGTSIGLLIENTDQRSQDYSAIKDVFRPGHADYTYEQKYGLRDYRGGGRSSARETAMRVAAGAIAKKYLAEKFGIEIRGCLTQMGDIPLDIKDWSQVEQNPFFCPDPDKIDALDELMRALKKEGDSIGAKVTVVASGVPAGLGEPVFDRLDADIAHALMSINAVKGVEIGDGFDVVALRGSQNRDEITKDGFQSNHAGGILGGISSGQQIIAHMALKPTSSITVPGRTINRFGEEVEMITKGRHDPCVGIRAVPIAEAMLAIVLMDHLLRQRAQNADVKTDIPRW</sequence>
<feature type="initiator methionine" description="Removed" evidence="4">
    <location>
        <position position="1"/>
    </location>
</feature>
<feature type="chain" id="PRO_0000140584" description="Chorismate synthase">
    <location>
        <begin position="2"/>
        <end position="361"/>
    </location>
</feature>
<feature type="binding site" evidence="1">
    <location>
        <position position="48"/>
    </location>
    <ligand>
        <name>NADP(+)</name>
        <dbReference type="ChEBI" id="CHEBI:58349"/>
    </ligand>
</feature>
<feature type="binding site" evidence="1">
    <location>
        <position position="54"/>
    </location>
    <ligand>
        <name>NADP(+)</name>
        <dbReference type="ChEBI" id="CHEBI:58349"/>
    </ligand>
</feature>
<feature type="binding site" evidence="1">
    <location>
        <begin position="125"/>
        <end position="127"/>
    </location>
    <ligand>
        <name>FMN</name>
        <dbReference type="ChEBI" id="CHEBI:58210"/>
    </ligand>
</feature>
<feature type="binding site" evidence="1">
    <location>
        <begin position="238"/>
        <end position="239"/>
    </location>
    <ligand>
        <name>FMN</name>
        <dbReference type="ChEBI" id="CHEBI:58210"/>
    </ligand>
</feature>
<feature type="binding site" evidence="1">
    <location>
        <position position="278"/>
    </location>
    <ligand>
        <name>FMN</name>
        <dbReference type="ChEBI" id="CHEBI:58210"/>
    </ligand>
</feature>
<feature type="binding site" evidence="1">
    <location>
        <begin position="293"/>
        <end position="297"/>
    </location>
    <ligand>
        <name>FMN</name>
        <dbReference type="ChEBI" id="CHEBI:58210"/>
    </ligand>
</feature>
<feature type="binding site" evidence="1">
    <location>
        <position position="319"/>
    </location>
    <ligand>
        <name>FMN</name>
        <dbReference type="ChEBI" id="CHEBI:58210"/>
    </ligand>
</feature>
<feature type="sequence conflict" description="In Ref. 2; AAA23488." evidence="12" ref="2">
    <original>C</original>
    <variation>S</variation>
    <location>
        <position position="25"/>
    </location>
</feature>
<feature type="sequence conflict" description="In Ref. 2; AAA23488." evidence="12" ref="2">
    <original>G</original>
    <variation>A</variation>
    <location>
        <position position="33"/>
    </location>
</feature>
<feature type="sequence conflict" description="In Ref. 2; AAA23488." evidence="12" ref="2">
    <original>R</original>
    <variation>P</variation>
    <location>
        <position position="260"/>
    </location>
</feature>
<feature type="sequence conflict" description="In Ref. 2; AAA23488." evidence="12" ref="2">
    <original>E</original>
    <variation>Q</variation>
    <location>
        <position position="310"/>
    </location>
</feature>
<feature type="sequence conflict" description="In Ref. 2; AAA23488/CAA68707." evidence="12" ref="2">
    <original>MLAIVLMDHLLRQRAQNADVKTDIPRW</original>
    <variation>NAGDRFNGSPVTATGAKCRCED</variation>
    <location>
        <begin position="335"/>
        <end position="361"/>
    </location>
</feature>
<keyword id="KW-0028">Amino-acid biosynthesis</keyword>
<keyword id="KW-0057">Aromatic amino acid biosynthesis</keyword>
<keyword id="KW-0903">Direct protein sequencing</keyword>
<keyword id="KW-0274">FAD</keyword>
<keyword id="KW-0285">Flavoprotein</keyword>
<keyword id="KW-0288">FMN</keyword>
<keyword id="KW-0456">Lyase</keyword>
<keyword id="KW-0521">NADP</keyword>
<keyword id="KW-1185">Reference proteome</keyword>
<protein>
    <recommendedName>
        <fullName evidence="1 10">Chorismate synthase</fullName>
        <shortName evidence="1">CS</shortName>
        <ecNumber evidence="1 2 3 5 6 7">4.2.3.5</ecNumber>
    </recommendedName>
    <alternativeName>
        <fullName evidence="1 10">5-enolpyruvylshikimate-3-phosphate phospholyase</fullName>
        <shortName evidence="11">EPSP phospholyase</shortName>
    </alternativeName>
</protein>
<comment type="function">
    <text evidence="1 2 3 4 5 6 7">Catalyzes the anti-1,4-elimination of the C-3 phosphate and the C-6 proR hydrogen from 5-enolpyruvylshikimate-3-phosphate (EPSP) to yield chorismate, which is the branch point compound that serves as the starting substrate for the three terminal pathways of aromatic amino acid biosynthesis. This reaction introduces a second double bond into the aromatic ring system. It uses NADPH to reduce FMN.</text>
</comment>
<comment type="catalytic activity">
    <reaction evidence="1 2 3 5 6 7">
        <text>5-O-(1-carboxyvinyl)-3-phosphoshikimate = chorismate + phosphate</text>
        <dbReference type="Rhea" id="RHEA:21020"/>
        <dbReference type="ChEBI" id="CHEBI:29748"/>
        <dbReference type="ChEBI" id="CHEBI:43474"/>
        <dbReference type="ChEBI" id="CHEBI:57701"/>
        <dbReference type="EC" id="4.2.3.5"/>
    </reaction>
</comment>
<comment type="cofactor">
    <cofactor evidence="1 2 3 4 6 8 9">
        <name>FMNH2</name>
        <dbReference type="ChEBI" id="CHEBI:57618"/>
    </cofactor>
    <text evidence="1 2 3 4 6 8 9">Reduced FMN (FMNH(2)). It can also use FAD, however FMN is the preferred cofactor.</text>
</comment>
<comment type="activity regulation">
    <text evidence="2 5">Competitively inhibited by 6R-6-fluoro-EPSP.</text>
</comment>
<comment type="biophysicochemical properties">
    <kinetics>
        <KM evidence="6">1.3 uM for EPSP</KM>
        <Vmax evidence="6">25.0 umol/min/mg enzyme</Vmax>
        <text evidence="5 6">kcat is 16.5 sec(-1) for phospholyase activity with EPSP as substrate. kcat is 27 sec(-1) for phospholyase activity with EPSP as substrate.</text>
    </kinetics>
    <phDependence>
        <text evidence="6">Optimum pH is between 7.5 and 8.</text>
    </phDependence>
</comment>
<comment type="pathway">
    <text evidence="1">Metabolic intermediate biosynthesis; chorismate biosynthesis; chorismate from D-erythrose 4-phosphate and phosphoenolpyruvate: step 7/7.</text>
</comment>
<comment type="subunit">
    <text evidence="1 4 9">Homotetramer.</text>
</comment>
<comment type="similarity">
    <text evidence="1 12">Belongs to the chorismate synthase family.</text>
</comment>
<organism>
    <name type="scientific">Escherichia coli (strain K12)</name>
    <dbReference type="NCBI Taxonomy" id="83333"/>
    <lineage>
        <taxon>Bacteria</taxon>
        <taxon>Pseudomonadati</taxon>
        <taxon>Pseudomonadota</taxon>
        <taxon>Gammaproteobacteria</taxon>
        <taxon>Enterobacterales</taxon>
        <taxon>Enterobacteriaceae</taxon>
        <taxon>Escherichia</taxon>
    </lineage>
</organism>
<proteinExistence type="evidence at protein level"/>
<dbReference type="EC" id="4.2.3.5" evidence="1 2 3 5 6 7"/>
<dbReference type="EMBL" id="M27714">
    <property type="protein sequence ID" value="AAA23487.1"/>
    <property type="molecule type" value="Genomic_DNA"/>
</dbReference>
<dbReference type="EMBL" id="Y00720">
    <property type="protein sequence ID" value="CAA68707.1"/>
    <property type="molecule type" value="Genomic_DNA"/>
</dbReference>
<dbReference type="EMBL" id="M33021">
    <property type="protein sequence ID" value="AAA23488.1"/>
    <property type="molecule type" value="Genomic_DNA"/>
</dbReference>
<dbReference type="EMBL" id="U00096">
    <property type="protein sequence ID" value="AAC75389.1"/>
    <property type="molecule type" value="Genomic_DNA"/>
</dbReference>
<dbReference type="EMBL" id="AP009048">
    <property type="protein sequence ID" value="BAA16185.2"/>
    <property type="molecule type" value="Genomic_DNA"/>
</dbReference>
<dbReference type="PIR" id="G65005">
    <property type="entry name" value="SYECKR"/>
</dbReference>
<dbReference type="RefSeq" id="NP_416832.1">
    <property type="nucleotide sequence ID" value="NC_000913.3"/>
</dbReference>
<dbReference type="RefSeq" id="WP_001333535.1">
    <property type="nucleotide sequence ID" value="NZ_LN832404.1"/>
</dbReference>
<dbReference type="SMR" id="P12008"/>
<dbReference type="BioGRID" id="4263044">
    <property type="interactions" value="51"/>
</dbReference>
<dbReference type="FunCoup" id="P12008">
    <property type="interactions" value="697"/>
</dbReference>
<dbReference type="IntAct" id="P12008">
    <property type="interactions" value="5"/>
</dbReference>
<dbReference type="STRING" id="511145.b2329"/>
<dbReference type="jPOST" id="P12008"/>
<dbReference type="PaxDb" id="511145-b2329"/>
<dbReference type="EnsemblBacteria" id="AAC75389">
    <property type="protein sequence ID" value="AAC75389"/>
    <property type="gene ID" value="b2329"/>
</dbReference>
<dbReference type="GeneID" id="75172457"/>
<dbReference type="GeneID" id="946814"/>
<dbReference type="KEGG" id="ecj:JW2326"/>
<dbReference type="KEGG" id="eco:b2329"/>
<dbReference type="KEGG" id="ecoc:C3026_12975"/>
<dbReference type="PATRIC" id="fig|511145.12.peg.2425"/>
<dbReference type="EchoBASE" id="EB0073"/>
<dbReference type="eggNOG" id="COG0082">
    <property type="taxonomic scope" value="Bacteria"/>
</dbReference>
<dbReference type="InParanoid" id="P12008"/>
<dbReference type="OMA" id="MLSINAV"/>
<dbReference type="OrthoDB" id="9771806at2"/>
<dbReference type="PhylomeDB" id="P12008"/>
<dbReference type="BioCyc" id="EcoCyc:AROC-MONOMER"/>
<dbReference type="BioCyc" id="MetaCyc:AROC-MONOMER"/>
<dbReference type="UniPathway" id="UPA00053">
    <property type="reaction ID" value="UER00090"/>
</dbReference>
<dbReference type="PRO" id="PR:P12008"/>
<dbReference type="Proteomes" id="UP000000625">
    <property type="component" value="Chromosome"/>
</dbReference>
<dbReference type="GO" id="GO:0005829">
    <property type="term" value="C:cytosol"/>
    <property type="evidence" value="ECO:0000314"/>
    <property type="project" value="EcoCyc"/>
</dbReference>
<dbReference type="GO" id="GO:0004107">
    <property type="term" value="F:chorismate synthase activity"/>
    <property type="evidence" value="ECO:0000314"/>
    <property type="project" value="EcoCyc"/>
</dbReference>
<dbReference type="GO" id="GO:0010181">
    <property type="term" value="F:FMN binding"/>
    <property type="evidence" value="ECO:0000314"/>
    <property type="project" value="UniProtKB"/>
</dbReference>
<dbReference type="GO" id="GO:0042802">
    <property type="term" value="F:identical protein binding"/>
    <property type="evidence" value="ECO:0000314"/>
    <property type="project" value="EcoCyc"/>
</dbReference>
<dbReference type="GO" id="GO:0008652">
    <property type="term" value="P:amino acid biosynthetic process"/>
    <property type="evidence" value="ECO:0007669"/>
    <property type="project" value="UniProtKB-KW"/>
</dbReference>
<dbReference type="GO" id="GO:0009073">
    <property type="term" value="P:aromatic amino acid family biosynthetic process"/>
    <property type="evidence" value="ECO:0000318"/>
    <property type="project" value="GO_Central"/>
</dbReference>
<dbReference type="GO" id="GO:0009423">
    <property type="term" value="P:chorismate biosynthetic process"/>
    <property type="evidence" value="ECO:0000314"/>
    <property type="project" value="EcoCyc"/>
</dbReference>
<dbReference type="CDD" id="cd07304">
    <property type="entry name" value="Chorismate_synthase"/>
    <property type="match status" value="1"/>
</dbReference>
<dbReference type="FunFam" id="3.60.150.10:FF:000001">
    <property type="entry name" value="Chorismate synthase"/>
    <property type="match status" value="1"/>
</dbReference>
<dbReference type="Gene3D" id="3.60.150.10">
    <property type="entry name" value="Chorismate synthase AroC"/>
    <property type="match status" value="1"/>
</dbReference>
<dbReference type="HAMAP" id="MF_00300">
    <property type="entry name" value="Chorismate_synth"/>
    <property type="match status" value="1"/>
</dbReference>
<dbReference type="InterPro" id="IPR000453">
    <property type="entry name" value="Chorismate_synth"/>
</dbReference>
<dbReference type="InterPro" id="IPR035904">
    <property type="entry name" value="Chorismate_synth_AroC_sf"/>
</dbReference>
<dbReference type="InterPro" id="IPR020541">
    <property type="entry name" value="Chorismate_synthase_CS"/>
</dbReference>
<dbReference type="NCBIfam" id="TIGR00033">
    <property type="entry name" value="aroC"/>
    <property type="match status" value="1"/>
</dbReference>
<dbReference type="NCBIfam" id="NF003793">
    <property type="entry name" value="PRK05382.1"/>
    <property type="match status" value="1"/>
</dbReference>
<dbReference type="PANTHER" id="PTHR21085">
    <property type="entry name" value="CHORISMATE SYNTHASE"/>
    <property type="match status" value="1"/>
</dbReference>
<dbReference type="PANTHER" id="PTHR21085:SF0">
    <property type="entry name" value="CHORISMATE SYNTHASE"/>
    <property type="match status" value="1"/>
</dbReference>
<dbReference type="Pfam" id="PF01264">
    <property type="entry name" value="Chorismate_synt"/>
    <property type="match status" value="1"/>
</dbReference>
<dbReference type="PIRSF" id="PIRSF001456">
    <property type="entry name" value="Chorismate_synth"/>
    <property type="match status" value="1"/>
</dbReference>
<dbReference type="SUPFAM" id="SSF103263">
    <property type="entry name" value="Chorismate synthase, AroC"/>
    <property type="match status" value="1"/>
</dbReference>
<dbReference type="PROSITE" id="PS00787">
    <property type="entry name" value="CHORISMATE_SYNTHASE_1"/>
    <property type="match status" value="1"/>
</dbReference>
<dbReference type="PROSITE" id="PS00788">
    <property type="entry name" value="CHORISMATE_SYNTHASE_2"/>
    <property type="match status" value="1"/>
</dbReference>
<dbReference type="PROSITE" id="PS00789">
    <property type="entry name" value="CHORISMATE_SYNTHASE_3"/>
    <property type="match status" value="1"/>
</dbReference>